<comment type="function">
    <text evidence="1">Required for insertion of 4Fe-4S clusters.</text>
</comment>
<comment type="cofactor">
    <cofactor evidence="1">
        <name>iron-sulfur cluster</name>
        <dbReference type="ChEBI" id="CHEBI:30408"/>
    </cofactor>
    <text evidence="1">Binds 1 iron-sulfur cluster per subunit.</text>
</comment>
<comment type="subunit">
    <text evidence="1">Homodimer.</text>
</comment>
<comment type="similarity">
    <text evidence="1">Belongs to the HesB/IscA family.</text>
</comment>
<reference key="1">
    <citation type="journal article" date="2007" name="Environ. Microbiol.">
        <title>Whole-genome analysis of the ammonia-oxidizing bacterium, Nitrosomonas eutropha C91: implications for niche adaptation.</title>
        <authorList>
            <person name="Stein L.Y."/>
            <person name="Arp D.J."/>
            <person name="Berube P.M."/>
            <person name="Chain P.S."/>
            <person name="Hauser L."/>
            <person name="Jetten M.S."/>
            <person name="Klotz M.G."/>
            <person name="Larimer F.W."/>
            <person name="Norton J.M."/>
            <person name="Op den Camp H.J.M."/>
            <person name="Shin M."/>
            <person name="Wei X."/>
        </authorList>
    </citation>
    <scope>NUCLEOTIDE SEQUENCE [LARGE SCALE GENOMIC DNA]</scope>
    <source>
        <strain>DSM 101675 / C91 / Nm57</strain>
    </source>
</reference>
<sequence>MNTITHEEANTVQPPLFFTDSAASKVKELIEEEANQALKLRVFVSGGGCSGFQYGFTFDEIINEDDFVIEKQGVRLLVDSMSVQYLLGAEIDYQENAQGAQFVIKNPAAASTCGCGSSFSV</sequence>
<dbReference type="EMBL" id="CP000450">
    <property type="protein sequence ID" value="ABI59786.1"/>
    <property type="molecule type" value="Genomic_DNA"/>
</dbReference>
<dbReference type="RefSeq" id="WP_011634592.1">
    <property type="nucleotide sequence ID" value="NC_008344.1"/>
</dbReference>
<dbReference type="SMR" id="Q0AFU6"/>
<dbReference type="STRING" id="335283.Neut_1542"/>
<dbReference type="KEGG" id="net:Neut_1542"/>
<dbReference type="eggNOG" id="COG0316">
    <property type="taxonomic scope" value="Bacteria"/>
</dbReference>
<dbReference type="HOGENOM" id="CLU_069054_5_3_4"/>
<dbReference type="OrthoDB" id="9801228at2"/>
<dbReference type="Proteomes" id="UP000001966">
    <property type="component" value="Chromosome"/>
</dbReference>
<dbReference type="GO" id="GO:0051537">
    <property type="term" value="F:2 iron, 2 sulfur cluster binding"/>
    <property type="evidence" value="ECO:0007669"/>
    <property type="project" value="UniProtKB-ARBA"/>
</dbReference>
<dbReference type="GO" id="GO:0051539">
    <property type="term" value="F:4 iron, 4 sulfur cluster binding"/>
    <property type="evidence" value="ECO:0007669"/>
    <property type="project" value="TreeGrafter"/>
</dbReference>
<dbReference type="GO" id="GO:0005506">
    <property type="term" value="F:iron ion binding"/>
    <property type="evidence" value="ECO:0007669"/>
    <property type="project" value="UniProtKB-UniRule"/>
</dbReference>
<dbReference type="GO" id="GO:0016226">
    <property type="term" value="P:iron-sulfur cluster assembly"/>
    <property type="evidence" value="ECO:0007669"/>
    <property type="project" value="UniProtKB-UniRule"/>
</dbReference>
<dbReference type="FunFam" id="2.60.300.12:FF:000002">
    <property type="entry name" value="Iron-sulfur cluster insertion protein ErpA"/>
    <property type="match status" value="1"/>
</dbReference>
<dbReference type="Gene3D" id="2.60.300.12">
    <property type="entry name" value="HesB-like domain"/>
    <property type="match status" value="1"/>
</dbReference>
<dbReference type="HAMAP" id="MF_01380">
    <property type="entry name" value="Fe_S_insert_ErpA"/>
    <property type="match status" value="1"/>
</dbReference>
<dbReference type="InterPro" id="IPR000361">
    <property type="entry name" value="FeS_biogenesis"/>
</dbReference>
<dbReference type="InterPro" id="IPR016092">
    <property type="entry name" value="FeS_cluster_insertion"/>
</dbReference>
<dbReference type="InterPro" id="IPR023063">
    <property type="entry name" value="FeS_cluster_insertion_RrpA"/>
</dbReference>
<dbReference type="InterPro" id="IPR035903">
    <property type="entry name" value="HesB-like_dom_sf"/>
</dbReference>
<dbReference type="NCBIfam" id="TIGR00049">
    <property type="entry name" value="iron-sulfur cluster assembly accessory protein"/>
    <property type="match status" value="1"/>
</dbReference>
<dbReference type="NCBIfam" id="NF010147">
    <property type="entry name" value="PRK13623.1"/>
    <property type="match status" value="1"/>
</dbReference>
<dbReference type="PANTHER" id="PTHR43011">
    <property type="entry name" value="IRON-SULFUR CLUSTER ASSEMBLY 2 HOMOLOG, MITOCHONDRIAL"/>
    <property type="match status" value="1"/>
</dbReference>
<dbReference type="PANTHER" id="PTHR43011:SF1">
    <property type="entry name" value="IRON-SULFUR CLUSTER ASSEMBLY 2 HOMOLOG, MITOCHONDRIAL"/>
    <property type="match status" value="1"/>
</dbReference>
<dbReference type="Pfam" id="PF01521">
    <property type="entry name" value="Fe-S_biosyn"/>
    <property type="match status" value="1"/>
</dbReference>
<dbReference type="SUPFAM" id="SSF89360">
    <property type="entry name" value="HesB-like domain"/>
    <property type="match status" value="1"/>
</dbReference>
<gene>
    <name evidence="1" type="primary">erpA</name>
    <name type="ordered locus">Neut_1542</name>
</gene>
<name>ERPA_NITEC</name>
<feature type="chain" id="PRO_0000311513" description="Putative iron-sulfur cluster insertion protein ErpA">
    <location>
        <begin position="1"/>
        <end position="121"/>
    </location>
</feature>
<feature type="binding site" evidence="1">
    <location>
        <position position="49"/>
    </location>
    <ligand>
        <name>iron-sulfur cluster</name>
        <dbReference type="ChEBI" id="CHEBI:30408"/>
    </ligand>
</feature>
<feature type="binding site" evidence="1">
    <location>
        <position position="113"/>
    </location>
    <ligand>
        <name>iron-sulfur cluster</name>
        <dbReference type="ChEBI" id="CHEBI:30408"/>
    </ligand>
</feature>
<feature type="binding site" evidence="1">
    <location>
        <position position="115"/>
    </location>
    <ligand>
        <name>iron-sulfur cluster</name>
        <dbReference type="ChEBI" id="CHEBI:30408"/>
    </ligand>
</feature>
<accession>Q0AFU6</accession>
<organism>
    <name type="scientific">Nitrosomonas eutropha (strain DSM 101675 / C91 / Nm57)</name>
    <dbReference type="NCBI Taxonomy" id="335283"/>
    <lineage>
        <taxon>Bacteria</taxon>
        <taxon>Pseudomonadati</taxon>
        <taxon>Pseudomonadota</taxon>
        <taxon>Betaproteobacteria</taxon>
        <taxon>Nitrosomonadales</taxon>
        <taxon>Nitrosomonadaceae</taxon>
        <taxon>Nitrosomonas</taxon>
    </lineage>
</organism>
<protein>
    <recommendedName>
        <fullName evidence="1">Putative iron-sulfur cluster insertion protein ErpA</fullName>
    </recommendedName>
</protein>
<evidence type="ECO:0000255" key="1">
    <source>
        <dbReference type="HAMAP-Rule" id="MF_01380"/>
    </source>
</evidence>
<keyword id="KW-0408">Iron</keyword>
<keyword id="KW-0411">Iron-sulfur</keyword>
<keyword id="KW-0479">Metal-binding</keyword>
<proteinExistence type="inferred from homology"/>